<organism>
    <name type="scientific">Mus musculus</name>
    <name type="common">Mouse</name>
    <dbReference type="NCBI Taxonomy" id="10090"/>
    <lineage>
        <taxon>Eukaryota</taxon>
        <taxon>Metazoa</taxon>
        <taxon>Chordata</taxon>
        <taxon>Craniata</taxon>
        <taxon>Vertebrata</taxon>
        <taxon>Euteleostomi</taxon>
        <taxon>Mammalia</taxon>
        <taxon>Eutheria</taxon>
        <taxon>Euarchontoglires</taxon>
        <taxon>Glires</taxon>
        <taxon>Rodentia</taxon>
        <taxon>Myomorpha</taxon>
        <taxon>Muroidea</taxon>
        <taxon>Muridae</taxon>
        <taxon>Murinae</taxon>
        <taxon>Mus</taxon>
        <taxon>Mus</taxon>
    </lineage>
</organism>
<evidence type="ECO:0000269" key="1">
    <source>
    </source>
</evidence>
<evidence type="ECO:0000269" key="2">
    <source>
    </source>
</evidence>
<evidence type="ECO:0000269" key="3">
    <source>
    </source>
</evidence>
<evidence type="ECO:0000305" key="4"/>
<evidence type="ECO:0007829" key="5">
    <source>
        <dbReference type="PDB" id="3KFF"/>
    </source>
</evidence>
<sequence length="178" mass="20542">MKLLLCLGLTLVCIHAEEATSKGQNLNVEKINGEWFSILLASDKREKIEEHGSMRVFVEHIHVLENSLAFKFHTVIDGECSEIFLVADKTEKAGEYSVMYDGFNTFTILKTDYDNYIMFHLINEKDGKTFQLMELYGRKADLNSDIKEKFVKLCEEHGIIKENIIDLTKTNRCLKARE</sequence>
<comment type="function">
    <text evidence="1 2">Binds pheromones, likely to displace pheromones complexed to urinary MUPs and transport them to the vomeronasal organ (VNO) where they associate with their neuronal receptor(s). MUP4 is highly specific for the male mouse pheromone 2-sec-butyl-4,5-dihydrothiazole (SBT).</text>
</comment>
<comment type="subcellular location">
    <subcellularLocation>
        <location>Secreted</location>
    </subcellularLocation>
</comment>
<comment type="tissue specificity">
    <text evidence="3">Expressed in lacrimal gland, parotid gland, sublingual gland, nasal mucus, and vomeronasal organ.</text>
</comment>
<comment type="similarity">
    <text evidence="4">Belongs to the calycin superfamily. Lipocalin family.</text>
</comment>
<dbReference type="EMBL" id="M16358">
    <property type="protein sequence ID" value="AAA39769.1"/>
    <property type="molecule type" value="mRNA"/>
</dbReference>
<dbReference type="EMBL" id="BC012227">
    <property type="protein sequence ID" value="AAH12227.1"/>
    <property type="molecule type" value="mRNA"/>
</dbReference>
<dbReference type="CCDS" id="CCDS18228.1"/>
<dbReference type="PIR" id="C26890">
    <property type="entry name" value="C26890"/>
</dbReference>
<dbReference type="RefSeq" id="NP_032674.1">
    <property type="nucleotide sequence ID" value="NM_008648.2"/>
</dbReference>
<dbReference type="PDB" id="3KFF">
    <property type="method" value="X-ray"/>
    <property type="resolution" value="0.96 A"/>
    <property type="chains" value="A=17-178"/>
</dbReference>
<dbReference type="PDB" id="3KFG">
    <property type="method" value="X-ray"/>
    <property type="resolution" value="1.43 A"/>
    <property type="chains" value="A=17-178"/>
</dbReference>
<dbReference type="PDB" id="3KFH">
    <property type="method" value="X-ray"/>
    <property type="resolution" value="1.02 A"/>
    <property type="chains" value="A=17-178"/>
</dbReference>
<dbReference type="PDB" id="3KFI">
    <property type="method" value="X-ray"/>
    <property type="resolution" value="1.42 A"/>
    <property type="chains" value="A=17-178"/>
</dbReference>
<dbReference type="PDBsum" id="3KFF"/>
<dbReference type="PDBsum" id="3KFG"/>
<dbReference type="PDBsum" id="3KFH"/>
<dbReference type="PDBsum" id="3KFI"/>
<dbReference type="SMR" id="P11590"/>
<dbReference type="FunCoup" id="P11590">
    <property type="interactions" value="312"/>
</dbReference>
<dbReference type="STRING" id="10090.ENSMUSP00000075356"/>
<dbReference type="Allergome" id="478">
    <property type="allergen name" value="Mus m 1"/>
</dbReference>
<dbReference type="iPTMnet" id="P11590"/>
<dbReference type="PhosphoSitePlus" id="P11590"/>
<dbReference type="jPOST" id="P11590"/>
<dbReference type="PaxDb" id="10090-ENSMUSP00000075356"/>
<dbReference type="ProteomicsDB" id="287642"/>
<dbReference type="DNASU" id="17843"/>
<dbReference type="Ensembl" id="ENSMUST00000075973.3">
    <property type="protein sequence ID" value="ENSMUSP00000075356.3"/>
    <property type="gene ID" value="ENSMUSG00000041333.7"/>
</dbReference>
<dbReference type="GeneID" id="17843"/>
<dbReference type="KEGG" id="mmu:17843"/>
<dbReference type="UCSC" id="uc008tag.1">
    <property type="organism name" value="mouse"/>
</dbReference>
<dbReference type="AGR" id="MGI:97236"/>
<dbReference type="CTD" id="17843"/>
<dbReference type="MGI" id="MGI:97236">
    <property type="gene designation" value="Mup4"/>
</dbReference>
<dbReference type="VEuPathDB" id="HostDB:ENSMUSG00000041333"/>
<dbReference type="eggNOG" id="ENOG502S6GK">
    <property type="taxonomic scope" value="Eukaryota"/>
</dbReference>
<dbReference type="GeneTree" id="ENSGT01050000244868"/>
<dbReference type="HOGENOM" id="CLU_094061_4_0_1"/>
<dbReference type="InParanoid" id="P11590"/>
<dbReference type="OMA" id="FHTKVNG"/>
<dbReference type="OrthoDB" id="9048943at2759"/>
<dbReference type="PhylomeDB" id="P11590"/>
<dbReference type="TreeFam" id="TF338197"/>
<dbReference type="BioGRID-ORCS" id="17843">
    <property type="hits" value="1 hit in 57 CRISPR screens"/>
</dbReference>
<dbReference type="ChiTaRS" id="Mup4">
    <property type="organism name" value="mouse"/>
</dbReference>
<dbReference type="EvolutionaryTrace" id="P11590"/>
<dbReference type="PRO" id="PR:P11590"/>
<dbReference type="Proteomes" id="UP000000589">
    <property type="component" value="Chromosome 4"/>
</dbReference>
<dbReference type="RNAct" id="P11590">
    <property type="molecule type" value="protein"/>
</dbReference>
<dbReference type="Bgee" id="ENSMUSG00000041333">
    <property type="expression patterns" value="Expressed in parotid gland and 27 other cell types or tissues"/>
</dbReference>
<dbReference type="ExpressionAtlas" id="P11590">
    <property type="expression patterns" value="baseline and differential"/>
</dbReference>
<dbReference type="GO" id="GO:0005829">
    <property type="term" value="C:cytosol"/>
    <property type="evidence" value="ECO:0000250"/>
    <property type="project" value="UniProtKB"/>
</dbReference>
<dbReference type="GO" id="GO:0005615">
    <property type="term" value="C:extracellular space"/>
    <property type="evidence" value="ECO:0000314"/>
    <property type="project" value="MGI"/>
</dbReference>
<dbReference type="GO" id="GO:0005634">
    <property type="term" value="C:nucleus"/>
    <property type="evidence" value="ECO:0000250"/>
    <property type="project" value="UniProtKB"/>
</dbReference>
<dbReference type="GO" id="GO:0005009">
    <property type="term" value="F:insulin receptor activity"/>
    <property type="evidence" value="ECO:0000250"/>
    <property type="project" value="UniProtKB"/>
</dbReference>
<dbReference type="GO" id="GO:0005550">
    <property type="term" value="F:pheromone binding"/>
    <property type="evidence" value="ECO:0000250"/>
    <property type="project" value="UniProtKB"/>
</dbReference>
<dbReference type="GO" id="GO:0036094">
    <property type="term" value="F:small molecule binding"/>
    <property type="evidence" value="ECO:0007669"/>
    <property type="project" value="InterPro"/>
</dbReference>
<dbReference type="GO" id="GO:0009060">
    <property type="term" value="P:aerobic respiration"/>
    <property type="evidence" value="ECO:0000250"/>
    <property type="project" value="UniProtKB"/>
</dbReference>
<dbReference type="GO" id="GO:0071396">
    <property type="term" value="P:cellular response to lipid"/>
    <property type="evidence" value="ECO:0000250"/>
    <property type="project" value="UniProtKB"/>
</dbReference>
<dbReference type="GO" id="GO:0006112">
    <property type="term" value="P:energy reserve metabolic process"/>
    <property type="evidence" value="ECO:0000250"/>
    <property type="project" value="UniProtKB"/>
</dbReference>
<dbReference type="GO" id="GO:0042593">
    <property type="term" value="P:glucose homeostasis"/>
    <property type="evidence" value="ECO:0000250"/>
    <property type="project" value="UniProtKB"/>
</dbReference>
<dbReference type="GO" id="GO:0031649">
    <property type="term" value="P:heat generation"/>
    <property type="evidence" value="ECO:0000250"/>
    <property type="project" value="UniProtKB"/>
</dbReference>
<dbReference type="GO" id="GO:0045475">
    <property type="term" value="P:locomotor rhythm"/>
    <property type="evidence" value="ECO:0000250"/>
    <property type="project" value="UniProtKB"/>
</dbReference>
<dbReference type="GO" id="GO:0007005">
    <property type="term" value="P:mitochondrion organization"/>
    <property type="evidence" value="ECO:0000250"/>
    <property type="project" value="UniProtKB"/>
</dbReference>
<dbReference type="GO" id="GO:0045892">
    <property type="term" value="P:negative regulation of DNA-templated transcription"/>
    <property type="evidence" value="ECO:0000250"/>
    <property type="project" value="UniProtKB"/>
</dbReference>
<dbReference type="GO" id="GO:0045721">
    <property type="term" value="P:negative regulation of gluconeogenesis"/>
    <property type="evidence" value="ECO:0000250"/>
    <property type="project" value="UniProtKB"/>
</dbReference>
<dbReference type="GO" id="GO:0061179">
    <property type="term" value="P:negative regulation of insulin secretion involved in cellular response to glucose stimulus"/>
    <property type="evidence" value="ECO:0000250"/>
    <property type="project" value="UniProtKB"/>
</dbReference>
<dbReference type="GO" id="GO:0051055">
    <property type="term" value="P:negative regulation of lipid biosynthetic process"/>
    <property type="evidence" value="ECO:0000250"/>
    <property type="project" value="UniProtKB"/>
</dbReference>
<dbReference type="GO" id="GO:0010888">
    <property type="term" value="P:negative regulation of lipid storage"/>
    <property type="evidence" value="ECO:0000250"/>
    <property type="project" value="UniProtKB"/>
</dbReference>
<dbReference type="GO" id="GO:0010628">
    <property type="term" value="P:positive regulation of gene expression"/>
    <property type="evidence" value="ECO:0000250"/>
    <property type="project" value="UniProtKB"/>
</dbReference>
<dbReference type="GO" id="GO:0010907">
    <property type="term" value="P:positive regulation of glucose metabolic process"/>
    <property type="evidence" value="ECO:0000250"/>
    <property type="project" value="UniProtKB"/>
</dbReference>
<dbReference type="GO" id="GO:0045834">
    <property type="term" value="P:positive regulation of lipid metabolic process"/>
    <property type="evidence" value="ECO:0000250"/>
    <property type="project" value="UniProtKB"/>
</dbReference>
<dbReference type="GO" id="GO:0051897">
    <property type="term" value="P:positive regulation of phosphatidylinositol 3-kinase/protein kinase B signal transduction"/>
    <property type="evidence" value="ECO:0000250"/>
    <property type="project" value="UniProtKB"/>
</dbReference>
<dbReference type="CDD" id="cd19428">
    <property type="entry name" value="lipocalin_MUP-like"/>
    <property type="match status" value="1"/>
</dbReference>
<dbReference type="FunFam" id="2.40.128.20:FF:000008">
    <property type="entry name" value="Major urinary protein"/>
    <property type="match status" value="1"/>
</dbReference>
<dbReference type="Gene3D" id="2.40.128.20">
    <property type="match status" value="1"/>
</dbReference>
<dbReference type="InterPro" id="IPR012674">
    <property type="entry name" value="Calycin"/>
</dbReference>
<dbReference type="InterPro" id="IPR002345">
    <property type="entry name" value="Lipocalin"/>
</dbReference>
<dbReference type="InterPro" id="IPR022272">
    <property type="entry name" value="Lipocalin_CS"/>
</dbReference>
<dbReference type="InterPro" id="IPR000566">
    <property type="entry name" value="Lipocln_cytosolic_FA-bd_dom"/>
</dbReference>
<dbReference type="InterPro" id="IPR002971">
    <property type="entry name" value="Maj_urinary"/>
</dbReference>
<dbReference type="PANTHER" id="PTHR11430">
    <property type="entry name" value="LIPOCALIN"/>
    <property type="match status" value="1"/>
</dbReference>
<dbReference type="PANTHER" id="PTHR11430:SF76">
    <property type="entry name" value="MAJOR URINARY PROTEIN 1-RELATED"/>
    <property type="match status" value="1"/>
</dbReference>
<dbReference type="Pfam" id="PF00061">
    <property type="entry name" value="Lipocalin"/>
    <property type="match status" value="1"/>
</dbReference>
<dbReference type="PRINTS" id="PR00179">
    <property type="entry name" value="LIPOCALIN"/>
</dbReference>
<dbReference type="PRINTS" id="PR01221">
    <property type="entry name" value="MAJORURINARY"/>
</dbReference>
<dbReference type="SUPFAM" id="SSF50814">
    <property type="entry name" value="Lipocalins"/>
    <property type="match status" value="1"/>
</dbReference>
<dbReference type="PROSITE" id="PS00213">
    <property type="entry name" value="LIPOCALIN"/>
    <property type="match status" value="1"/>
</dbReference>
<protein>
    <recommendedName>
        <fullName>Major urinary protein 4</fullName>
        <shortName>MUP 4</shortName>
    </recommendedName>
</protein>
<gene>
    <name type="primary">Mup4</name>
</gene>
<feature type="signal peptide" evidence="1">
    <location>
        <begin position="1"/>
        <end position="16"/>
    </location>
</feature>
<feature type="chain" id="PRO_0000017930" description="Major urinary protein 4">
    <location>
        <begin position="17"/>
        <end position="178"/>
    </location>
</feature>
<feature type="disulfide bond" evidence="2">
    <location>
        <begin position="80"/>
        <end position="173"/>
    </location>
</feature>
<feature type="helix" evidence="5">
    <location>
        <begin position="28"/>
        <end position="31"/>
    </location>
</feature>
<feature type="strand" evidence="5">
    <location>
        <begin position="36"/>
        <end position="44"/>
    </location>
</feature>
<feature type="helix" evidence="5">
    <location>
        <begin position="45"/>
        <end position="48"/>
    </location>
</feature>
<feature type="strand" evidence="5">
    <location>
        <begin position="57"/>
        <end position="63"/>
    </location>
</feature>
<feature type="strand" evidence="5">
    <location>
        <begin position="65"/>
        <end position="76"/>
    </location>
</feature>
<feature type="strand" evidence="5">
    <location>
        <begin position="79"/>
        <end position="89"/>
    </location>
</feature>
<feature type="strand" evidence="5">
    <location>
        <begin position="96"/>
        <end position="111"/>
    </location>
</feature>
<feature type="strand" evidence="5">
    <location>
        <begin position="113"/>
        <end position="125"/>
    </location>
</feature>
<feature type="strand" evidence="5">
    <location>
        <begin position="128"/>
        <end position="140"/>
    </location>
</feature>
<feature type="helix" evidence="5">
    <location>
        <begin position="144"/>
        <end position="156"/>
    </location>
</feature>
<feature type="helix" evidence="5">
    <location>
        <begin position="161"/>
        <end position="163"/>
    </location>
</feature>
<feature type="strand" evidence="5">
    <location>
        <begin position="164"/>
        <end position="166"/>
    </location>
</feature>
<feature type="helix" evidence="5">
    <location>
        <begin position="167"/>
        <end position="169"/>
    </location>
</feature>
<feature type="helix" evidence="5">
    <location>
        <begin position="174"/>
        <end position="176"/>
    </location>
</feature>
<keyword id="KW-0002">3D-structure</keyword>
<keyword id="KW-0903">Direct protein sequencing</keyword>
<keyword id="KW-1015">Disulfide bond</keyword>
<keyword id="KW-0590">Pheromone-binding</keyword>
<keyword id="KW-1185">Reference proteome</keyword>
<keyword id="KW-0964">Secreted</keyword>
<keyword id="KW-0732">Signal</keyword>
<keyword id="KW-0813">Transport</keyword>
<accession>P11590</accession>
<name>MUP4_MOUSE</name>
<proteinExistence type="evidence at protein level"/>
<reference key="1">
    <citation type="journal article" date="1987" name="Mol. Cell. Biol.">
        <title>Nucleotide sequences of liver, lachrymal, and submaxillary gland mouse major urinary protein mRNAs: mosaic structure and construction of panels of gene-specific synthetic oligonucleotide probes.</title>
        <authorList>
            <person name="Shahan K."/>
            <person name="Gilmartin M."/>
            <person name="Derman E."/>
        </authorList>
    </citation>
    <scope>NUCLEOTIDE SEQUENCE [MRNA]</scope>
    <source>
        <strain>BALB/cJ</strain>
        <tissue>Lacrimal gland</tissue>
    </source>
</reference>
<reference key="2">
    <citation type="journal article" date="2004" name="Genome Res.">
        <title>The status, quality, and expansion of the NIH full-length cDNA project: the Mammalian Gene Collection (MGC).</title>
        <authorList>
            <consortium name="The MGC Project Team"/>
        </authorList>
    </citation>
    <scope>NUCLEOTIDE SEQUENCE [LARGE SCALE MRNA]</scope>
    <source>
        <tissue>Salivary gland</tissue>
    </source>
</reference>
<reference key="3">
    <citation type="journal article" date="2002" name="Protein Sci.">
        <title>Pheromone binding by polymorphic mouse major urinary proteins.</title>
        <authorList>
            <person name="Sharrow S.D."/>
            <person name="Vaughn J.L."/>
            <person name="Zidek L."/>
            <person name="Novotny M.V."/>
            <person name="Stone M.J."/>
        </authorList>
    </citation>
    <scope>PROTEIN SEQUENCE OF 17-25</scope>
    <scope>LIGAND AFFINITY ASSAY</scope>
    <scope>FUNCTION</scope>
    <source>
        <tissue>Nasal mucus</tissue>
    </source>
</reference>
<reference key="4">
    <citation type="journal article" date="1987" name="Mol. Cell. Biol.">
        <title>Expression of six mouse major urinary protein genes in the mammary, parotid, sublingual, submaxillary, and lachrymal glands and in the liver.</title>
        <authorList>
            <person name="Shahan K."/>
            <person name="Denaro M."/>
            <person name="Gilmartin M."/>
            <person name="Shi Y."/>
            <person name="Derman E."/>
        </authorList>
    </citation>
    <scope>TISSUE SPECIFICITY</scope>
</reference>
<reference key="5">
    <citation type="journal article" date="2010" name="Protein Sci.">
        <title>High resolution X-ray structures of mouse major urinary protein nasal isoform in complex with pheromones.</title>
        <authorList>
            <person name="Perez-Miller S."/>
            <person name="Zou Q."/>
            <person name="Novotny M.V."/>
            <person name="Hurley T.D."/>
        </authorList>
    </citation>
    <scope>X-RAY CRYSTALLOGRAPHY (0.96 ANGSTROMS) OF 17-178 IN COMPLEX WITH PHEROMONES</scope>
    <scope>FUNCTION</scope>
    <scope>DISULFIDE BOND</scope>
</reference>